<comment type="function">
    <text evidence="3 13 16 17">Binds to membranes enriched in phosphatidylinositol 4,5-bisphosphate (PtdIns(4,5)P2) (PubMed:11161217). Modifies membrane curvature and facilitates the formation of clathrin-coated invaginations (PubMed:12353027, PubMed:9723620). Regulates receptor-mediated endocytosis (By similarity).</text>
</comment>
<comment type="subunit">
    <text evidence="2 3 7 9 10 11 12 13 15 16 17 18">Monomer. Binds ITSN1 (By similarity). Binds clathrin, ZBTB16/ZNF145, AP2A1 and AP2A2. Binds ubiquitinated proteins. Interacts with RALBP1 in a complex also containing NUMB and TFAP2A during interphase and mitosis. Interacts with AP2B1. Interacts with UBQLN2 (By similarity). Interacts with REPS2; the interaction is direct (By similarity). Interacts with EPS15; the interaction is direct (By similarity). Interacts with ENTREP1 (By similarity).</text>
</comment>
<comment type="interaction">
    <interactant intactId="EBI-7066728">
        <id>O88339</id>
    </interactant>
    <interactant intactId="EBI-15044">
        <id>P39083</id>
        <label>RGA1</label>
    </interactant>
    <organismsDiffer>true</organismsDiffer>
    <experiments>2</experiments>
</comment>
<comment type="interaction">
    <interactant intactId="EBI-7066728">
        <id>O88339</id>
    </interactant>
    <interactant intactId="EBI-15060">
        <id>Q06407</id>
        <label>RGA2</label>
    </interactant>
    <organismsDiffer>true</organismsDiffer>
    <experiments>2</experiments>
</comment>
<comment type="subcellular location">
    <subcellularLocation>
        <location>Cytoplasm</location>
    </subcellularLocation>
    <subcellularLocation>
        <location>Cell membrane</location>
        <topology>Peripheral membrane protein</topology>
    </subcellularLocation>
    <subcellularLocation>
        <location>Nucleus</location>
    </subcellularLocation>
    <subcellularLocation>
        <location>Membrane</location>
        <location>Clathrin-coated pit</location>
    </subcellularLocation>
    <text>Associated with the cytoplasmic membrane at sites where clathrin-coated pits are forming. Colocalizes with clathrin and AP-2 in a punctate pattern on the plasma membrane. Colocalizes with clathrin at the Golgi complex. Detected in presynaptic nerve terminals and in synaptosomes. May shuttle to the nucleus when associated with ZBTB16/ZNF145.</text>
</comment>
<comment type="tissue specificity">
    <text evidence="8 17">Ubiquitously expressed (PubMed:9723620). Detected in liver, spleen and testis, and weakly in lung and thymus (at protein level) (PubMed:10393179).</text>
</comment>
<comment type="domain">
    <text>The NPF repeat domain is involved in EPS15 binding.</text>
</comment>
<comment type="domain">
    <text>The DPW repeat domain is involved in AP2A2 and clathrin binding.</text>
</comment>
<comment type="domain">
    <text evidence="1">The [DE]-X(1,2)-F-X-X-[FL]-X-X-X-R motif mediates interaction the AP-2 complex subunit AP2B1.</text>
</comment>
<comment type="PTM">
    <text evidence="14">Ubiquitinated.</text>
</comment>
<comment type="PTM">
    <text evidence="18">Phosphorylated on serine and/or threonine residues in mitotic cells. Phosphorylation reduces interaction with REPS2, AP-2 and the membrane fraction. Depolarization of synaptosomes results in dephosphorylation.</text>
</comment>
<comment type="similarity">
    <text evidence="19">Belongs to the epsin family.</text>
</comment>
<comment type="online information" name="Protein Spotlight">
    <link uri="https://www.proteinspotlight.org/back_issues/042"/>
    <text>The bubble's bend - Issue 42 of January 2004</text>
</comment>
<proteinExistence type="evidence at protein level"/>
<name>EPN1_RAT</name>
<accession>O88339</accession>
<sequence>MSTSSLRRQMKNIVHNYSEAEIKVREATSNDPWGPSSSLMSEIADLTYNVVAFSEIMSMIWKRLNDHGKNWRHVYKAMTLMEYLIKTGSERVSQQCKENMYAVQTLKDFQYVDRDGKDQGVNVREKAKQLVALLRDEDRLREERAHALKTKEKLAQTATASSAAVGSGPPPEAEQAWPQSSGEEELQLQLALAMSKEEADQPPSCGPEDDVQLQLALSLSREEHDKEERIRRGDDLRLQMAIEESKRETGGKEESSLMDLADVFTTPAPPQASDPWGGPASVPTAVPVAAAASDPWGAPAVPPAADPWGGAAPTPASGDPWRPAAPTGPSVDPWGGTPAPAAGEGPTSDPWGSADGGAPVSGPPSSDPWAPAPAFSDPWGGSPAKPSSNGTAVGGFDTEPDEFSDFDRLRTALPTSGSSTGELELLAGEVPARSPGAFDMSGVGGSLAESVGSPPPAATPTPTPPTRKTPESFLGPNAALVDLDSLVSRPGPTPPGAKASNPFLPSGAPATGPSVTNPFQPAPPATLTLNQLRLSPVPPVPGAPPTYISPLGGGPGLPPMMPPGPPAPNTNPFLL</sequence>
<keyword id="KW-0002">3D-structure</keyword>
<keyword id="KW-1003">Cell membrane</keyword>
<keyword id="KW-0168">Coated pit</keyword>
<keyword id="KW-0963">Cytoplasm</keyword>
<keyword id="KW-0254">Endocytosis</keyword>
<keyword id="KW-0446">Lipid-binding</keyword>
<keyword id="KW-0472">Membrane</keyword>
<keyword id="KW-0488">Methylation</keyword>
<keyword id="KW-0539">Nucleus</keyword>
<keyword id="KW-0597">Phosphoprotein</keyword>
<keyword id="KW-1185">Reference proteome</keyword>
<keyword id="KW-0677">Repeat</keyword>
<keyword id="KW-0832">Ubl conjugation</keyword>
<feature type="chain" id="PRO_0000074515" description="Epsin-1">
    <location>
        <begin position="1"/>
        <end position="575"/>
    </location>
</feature>
<feature type="domain" description="ENTH" evidence="5">
    <location>
        <begin position="12"/>
        <end position="144"/>
    </location>
</feature>
<feature type="domain" description="UIM 1" evidence="4">
    <location>
        <begin position="183"/>
        <end position="202"/>
    </location>
</feature>
<feature type="domain" description="UIM 2" evidence="4">
    <location>
        <begin position="208"/>
        <end position="227"/>
    </location>
</feature>
<feature type="domain" description="UIM 3" evidence="4">
    <location>
        <begin position="233"/>
        <end position="252"/>
    </location>
</feature>
<feature type="repeat" description="1">
    <location>
        <begin position="274"/>
        <end position="276"/>
    </location>
</feature>
<feature type="repeat" description="2">
    <location>
        <begin position="294"/>
        <end position="296"/>
    </location>
</feature>
<feature type="repeat" description="3">
    <location>
        <begin position="306"/>
        <end position="308"/>
    </location>
</feature>
<feature type="repeat" description="4">
    <location>
        <begin position="319"/>
        <end position="321"/>
    </location>
</feature>
<feature type="repeat" description="5">
    <location>
        <begin position="332"/>
        <end position="334"/>
    </location>
</feature>
<feature type="repeat" description="6">
    <location>
        <begin position="349"/>
        <end position="351"/>
    </location>
</feature>
<feature type="repeat" description="7">
    <location>
        <begin position="367"/>
        <end position="369"/>
    </location>
</feature>
<feature type="repeat" description="8">
    <location>
        <begin position="377"/>
        <end position="379"/>
    </location>
</feature>
<feature type="repeat" description="1">
    <location>
        <begin position="501"/>
        <end position="503"/>
    </location>
</feature>
<feature type="repeat" description="2">
    <location>
        <begin position="517"/>
        <end position="519"/>
    </location>
</feature>
<feature type="repeat" description="3">
    <location>
        <begin position="571"/>
        <end position="573"/>
    </location>
</feature>
<feature type="region of interest" description="Disordered" evidence="6">
    <location>
        <begin position="149"/>
        <end position="186"/>
    </location>
</feature>
<feature type="region of interest" description="Disordered" evidence="6">
    <location>
        <begin position="264"/>
        <end position="283"/>
    </location>
</feature>
<feature type="region of interest" description="8 X 3 AA repeats of D-P-W">
    <location>
        <begin position="274"/>
        <end position="379"/>
    </location>
</feature>
<feature type="region of interest" description="Disordered" evidence="6">
    <location>
        <begin position="293"/>
        <end position="575"/>
    </location>
</feature>
<feature type="region of interest" description="3 X 3 AA repeats of N-P-F">
    <location>
        <begin position="501"/>
        <end position="573"/>
    </location>
</feature>
<feature type="short sequence motif" description="[DE]-X(1,2)-F-X-X-[FL]-X-X-X-R motif">
    <location>
        <begin position="401"/>
        <end position="410"/>
    </location>
</feature>
<feature type="compositionally biased region" description="Low complexity" evidence="6">
    <location>
        <begin position="157"/>
        <end position="167"/>
    </location>
</feature>
<feature type="compositionally biased region" description="Low complexity" evidence="6">
    <location>
        <begin position="306"/>
        <end position="316"/>
    </location>
</feature>
<feature type="compositionally biased region" description="Low complexity" evidence="6">
    <location>
        <begin position="333"/>
        <end position="346"/>
    </location>
</feature>
<feature type="compositionally biased region" description="Low complexity" evidence="6">
    <location>
        <begin position="367"/>
        <end position="379"/>
    </location>
</feature>
<feature type="compositionally biased region" description="Pro residues" evidence="6">
    <location>
        <begin position="453"/>
        <end position="467"/>
    </location>
</feature>
<feature type="compositionally biased region" description="Pro residues" evidence="6">
    <location>
        <begin position="556"/>
        <end position="569"/>
    </location>
</feature>
<feature type="binding site">
    <location>
        <position position="8"/>
    </location>
    <ligand>
        <name>a 1,2-diacyl-sn-glycero-3-phospho-(1D-myo-inositol-4,5-bisphosphate)</name>
        <dbReference type="ChEBI" id="CHEBI:58456"/>
    </ligand>
</feature>
<feature type="binding site">
    <location>
        <position position="11"/>
    </location>
    <ligand>
        <name>a 1,2-diacyl-sn-glycero-3-phospho-(1D-myo-inositol-4,5-bisphosphate)</name>
        <dbReference type="ChEBI" id="CHEBI:58456"/>
    </ligand>
</feature>
<feature type="binding site">
    <location>
        <position position="25"/>
    </location>
    <ligand>
        <name>a 1,2-diacyl-sn-glycero-3-phospho-(1D-myo-inositol-4,5-bisphosphate)</name>
        <dbReference type="ChEBI" id="CHEBI:58456"/>
    </ligand>
</feature>
<feature type="binding site">
    <location>
        <position position="30"/>
    </location>
    <ligand>
        <name>a 1,2-diacyl-sn-glycero-3-phospho-(1D-myo-inositol-4,5-bisphosphate)</name>
        <dbReference type="ChEBI" id="CHEBI:58456"/>
    </ligand>
</feature>
<feature type="binding site">
    <location>
        <position position="63"/>
    </location>
    <ligand>
        <name>a 1,2-diacyl-sn-glycero-3-phospho-(1D-myo-inositol-4,5-bisphosphate)</name>
        <dbReference type="ChEBI" id="CHEBI:58456"/>
    </ligand>
</feature>
<feature type="binding site">
    <location>
        <position position="73"/>
    </location>
    <ligand>
        <name>a 1,2-diacyl-sn-glycero-3-phospho-(1D-myo-inositol-4,5-bisphosphate)</name>
        <dbReference type="ChEBI" id="CHEBI:58456"/>
    </ligand>
</feature>
<feature type="modified residue" description="Phosphoserine" evidence="3">
    <location>
        <position position="382"/>
    </location>
</feature>
<feature type="modified residue" description="Phosphoserine" evidence="3">
    <location>
        <position position="418"/>
    </location>
</feature>
<feature type="modified residue" description="Phosphoserine" evidence="3">
    <location>
        <position position="419"/>
    </location>
</feature>
<feature type="modified residue" description="Phosphothreonine" evidence="2">
    <location>
        <position position="420"/>
    </location>
</feature>
<feature type="modified residue" description="Phosphoserine" evidence="3">
    <location>
        <position position="434"/>
    </location>
</feature>
<feature type="modified residue" description="Phosphoserine" evidence="3">
    <location>
        <position position="446"/>
    </location>
</feature>
<feature type="modified residue" description="Phosphoserine" evidence="20">
    <location>
        <position position="453"/>
    </location>
</feature>
<feature type="modified residue" description="Phosphothreonine" evidence="3">
    <location>
        <position position="459"/>
    </location>
</feature>
<feature type="modified residue" description="Phosphothreonine" evidence="3">
    <location>
        <position position="463"/>
    </location>
</feature>
<feature type="modified residue" description="Phosphothreonine" evidence="20">
    <location>
        <position position="469"/>
    </location>
</feature>
<feature type="modified residue" description="Phosphoserine" evidence="2">
    <location>
        <position position="472"/>
    </location>
</feature>
<feature type="modified residue" description="Phosphothreonine" evidence="3">
    <location>
        <position position="493"/>
    </location>
</feature>
<feature type="modified residue" description="Omega-N-methylarginine" evidence="2">
    <location>
        <position position="533"/>
    </location>
</feature>
<feature type="mutagenesis site" description="Reduces lipid binding." evidence="16">
    <original>L</original>
    <variation>E</variation>
    <variation>H</variation>
    <variation>Q</variation>
    <location>
        <position position="6"/>
    </location>
</feature>
<feature type="mutagenesis site" description="Strongly reduces lipid binding." evidence="13">
    <original>R</original>
    <variation>A</variation>
    <location>
        <position position="8"/>
    </location>
</feature>
<feature type="mutagenesis site" description="Strongly reduces lipid binding. Abolishes lipid binding; when associated with L-73." evidence="13 16">
    <original>R</original>
    <variation>L</variation>
    <location>
        <position position="63"/>
    </location>
</feature>
<feature type="mutagenesis site" description="Abolishes ZNF145 binding." evidence="13">
    <original>R</original>
    <variation>A</variation>
    <location>
        <position position="72"/>
    </location>
</feature>
<feature type="mutagenesis site" description="Abolishes lipid binding; when associated with L-63." evidence="16">
    <original>H</original>
    <variation>L</variation>
    <location>
        <position position="73"/>
    </location>
</feature>
<feature type="mutagenesis site" description="Strongly reduces lipid binding." evidence="13">
    <original>K</original>
    <variation>A</variation>
    <location>
        <position position="76"/>
    </location>
</feature>
<feature type="mutagenesis site" description="Abolishes mono-ubiquitination." evidence="14">
    <original>L</original>
    <variation>A</variation>
    <location>
        <position position="190"/>
    </location>
</feature>
<feature type="mutagenesis site" description="Strongly reduces clathrin binding." evidence="10">
    <original>LMD</original>
    <variation>AAA</variation>
    <location>
        <begin position="257"/>
        <end position="259"/>
    </location>
</feature>
<feature type="mutagenesis site" description="Strongly reduces clathrin binding." evidence="10">
    <original>LADV</original>
    <variation>AAAA</variation>
    <location>
        <begin position="260"/>
        <end position="263"/>
    </location>
</feature>
<feature type="helix" evidence="22">
    <location>
        <begin position="2"/>
        <end position="15"/>
    </location>
</feature>
<feature type="helix" evidence="21">
    <location>
        <begin position="19"/>
        <end position="27"/>
    </location>
</feature>
<feature type="strand" evidence="21">
    <location>
        <begin position="30"/>
        <end position="33"/>
    </location>
</feature>
<feature type="helix" evidence="21">
    <location>
        <begin position="37"/>
        <end position="46"/>
    </location>
</feature>
<feature type="helix" evidence="21">
    <location>
        <begin position="50"/>
        <end position="64"/>
    </location>
</feature>
<feature type="helix" evidence="21">
    <location>
        <begin position="68"/>
        <end position="70"/>
    </location>
</feature>
<feature type="helix" evidence="21">
    <location>
        <begin position="71"/>
        <end position="87"/>
    </location>
</feature>
<feature type="helix" evidence="21">
    <location>
        <begin position="90"/>
        <end position="98"/>
    </location>
</feature>
<feature type="helix" evidence="21">
    <location>
        <begin position="100"/>
        <end position="104"/>
    </location>
</feature>
<feature type="helix" evidence="21">
    <location>
        <begin position="105"/>
        <end position="108"/>
    </location>
</feature>
<feature type="helix" evidence="21">
    <location>
        <begin position="120"/>
        <end position="135"/>
    </location>
</feature>
<feature type="helix" evidence="21">
    <location>
        <begin position="137"/>
        <end position="155"/>
    </location>
</feature>
<organism>
    <name type="scientific">Rattus norvegicus</name>
    <name type="common">Rat</name>
    <dbReference type="NCBI Taxonomy" id="10116"/>
    <lineage>
        <taxon>Eukaryota</taxon>
        <taxon>Metazoa</taxon>
        <taxon>Chordata</taxon>
        <taxon>Craniata</taxon>
        <taxon>Vertebrata</taxon>
        <taxon>Euteleostomi</taxon>
        <taxon>Mammalia</taxon>
        <taxon>Eutheria</taxon>
        <taxon>Euarchontoglires</taxon>
        <taxon>Glires</taxon>
        <taxon>Rodentia</taxon>
        <taxon>Myomorpha</taxon>
        <taxon>Muroidea</taxon>
        <taxon>Muridae</taxon>
        <taxon>Murinae</taxon>
        <taxon>Rattus</taxon>
    </lineage>
</organism>
<evidence type="ECO:0000250" key="1"/>
<evidence type="ECO:0000250" key="2">
    <source>
        <dbReference type="UniProtKB" id="Q80VP1"/>
    </source>
</evidence>
<evidence type="ECO:0000250" key="3">
    <source>
        <dbReference type="UniProtKB" id="Q9Y6I3"/>
    </source>
</evidence>
<evidence type="ECO:0000255" key="4">
    <source>
        <dbReference type="PROSITE-ProRule" id="PRU00213"/>
    </source>
</evidence>
<evidence type="ECO:0000255" key="5">
    <source>
        <dbReference type="PROSITE-ProRule" id="PRU00243"/>
    </source>
</evidence>
<evidence type="ECO:0000256" key="6">
    <source>
        <dbReference type="SAM" id="MobiDB-lite"/>
    </source>
</evidence>
<evidence type="ECO:0000269" key="7">
    <source>
    </source>
</evidence>
<evidence type="ECO:0000269" key="8">
    <source>
    </source>
</evidence>
<evidence type="ECO:0000269" key="9">
    <source>
    </source>
</evidence>
<evidence type="ECO:0000269" key="10">
    <source>
    </source>
</evidence>
<evidence type="ECO:0000269" key="11">
    <source>
    </source>
</evidence>
<evidence type="ECO:0000269" key="12">
    <source>
    </source>
</evidence>
<evidence type="ECO:0000269" key="13">
    <source>
    </source>
</evidence>
<evidence type="ECO:0000269" key="14">
    <source>
    </source>
</evidence>
<evidence type="ECO:0000269" key="15">
    <source>
    </source>
</evidence>
<evidence type="ECO:0000269" key="16">
    <source>
    </source>
</evidence>
<evidence type="ECO:0000269" key="17">
    <source>
    </source>
</evidence>
<evidence type="ECO:0000269" key="18">
    <source>
    </source>
</evidence>
<evidence type="ECO:0000305" key="19"/>
<evidence type="ECO:0007744" key="20">
    <source>
    </source>
</evidence>
<evidence type="ECO:0007829" key="21">
    <source>
        <dbReference type="PDB" id="1EYH"/>
    </source>
</evidence>
<evidence type="ECO:0007829" key="22">
    <source>
        <dbReference type="PDB" id="1H0A"/>
    </source>
</evidence>
<dbReference type="EMBL" id="AF018261">
    <property type="protein sequence ID" value="AAC33823.1"/>
    <property type="molecule type" value="mRNA"/>
</dbReference>
<dbReference type="RefSeq" id="NP_476477.1">
    <property type="nucleotide sequence ID" value="NM_057136.2"/>
</dbReference>
<dbReference type="PDB" id="1EDU">
    <property type="method" value="X-ray"/>
    <property type="resolution" value="1.80 A"/>
    <property type="chains" value="A=12-160"/>
</dbReference>
<dbReference type="PDB" id="1EYH">
    <property type="method" value="X-ray"/>
    <property type="resolution" value="1.56 A"/>
    <property type="chains" value="A=15-158"/>
</dbReference>
<dbReference type="PDB" id="1H0A">
    <property type="method" value="X-ray"/>
    <property type="resolution" value="1.70 A"/>
    <property type="chains" value="A=1-158"/>
</dbReference>
<dbReference type="PDB" id="1KY6">
    <property type="method" value="X-ray"/>
    <property type="resolution" value="2.00 A"/>
    <property type="chains" value="P=375-381"/>
</dbReference>
<dbReference type="PDBsum" id="1EDU"/>
<dbReference type="PDBsum" id="1EYH"/>
<dbReference type="PDBsum" id="1H0A"/>
<dbReference type="PDBsum" id="1KY6"/>
<dbReference type="BMRB" id="O88339"/>
<dbReference type="SMR" id="O88339"/>
<dbReference type="BioGRID" id="250724">
    <property type="interactions" value="16"/>
</dbReference>
<dbReference type="CORUM" id="O88339"/>
<dbReference type="DIP" id="DIP-40738N"/>
<dbReference type="ELM" id="O88339"/>
<dbReference type="FunCoup" id="O88339">
    <property type="interactions" value="999"/>
</dbReference>
<dbReference type="IntAct" id="O88339">
    <property type="interactions" value="5"/>
</dbReference>
<dbReference type="MINT" id="O88339"/>
<dbReference type="STRING" id="10116.ENSRNOP00000021286"/>
<dbReference type="GlyGen" id="O88339">
    <property type="glycosylation" value="8 sites"/>
</dbReference>
<dbReference type="iPTMnet" id="O88339"/>
<dbReference type="PhosphoSitePlus" id="O88339"/>
<dbReference type="jPOST" id="O88339"/>
<dbReference type="PaxDb" id="10116-ENSRNOP00000021286"/>
<dbReference type="PeptideAtlas" id="O88339"/>
<dbReference type="GeneID" id="117277"/>
<dbReference type="KEGG" id="rno:117277"/>
<dbReference type="UCSC" id="RGD:619772">
    <property type="organism name" value="rat"/>
</dbReference>
<dbReference type="AGR" id="RGD:619772"/>
<dbReference type="CTD" id="29924"/>
<dbReference type="RGD" id="619772">
    <property type="gene designation" value="Epn1"/>
</dbReference>
<dbReference type="eggNOG" id="KOG2056">
    <property type="taxonomic scope" value="Eukaryota"/>
</dbReference>
<dbReference type="HOGENOM" id="CLU_012678_4_2_1"/>
<dbReference type="InParanoid" id="O88339"/>
<dbReference type="PhylomeDB" id="O88339"/>
<dbReference type="Reactome" id="R-RNO-182971">
    <property type="pathway name" value="EGFR downregulation"/>
</dbReference>
<dbReference type="Reactome" id="R-RNO-8856825">
    <property type="pathway name" value="Cargo recognition for clathrin-mediated endocytosis"/>
</dbReference>
<dbReference type="Reactome" id="R-RNO-8856828">
    <property type="pathway name" value="Clathrin-mediated endocytosis"/>
</dbReference>
<dbReference type="EvolutionaryTrace" id="O88339"/>
<dbReference type="PRO" id="PR:O88339"/>
<dbReference type="Proteomes" id="UP000002494">
    <property type="component" value="Unplaced"/>
</dbReference>
<dbReference type="GO" id="GO:0030125">
    <property type="term" value="C:clathrin vesicle coat"/>
    <property type="evidence" value="ECO:0000318"/>
    <property type="project" value="GO_Central"/>
</dbReference>
<dbReference type="GO" id="GO:0005905">
    <property type="term" value="C:clathrin-coated pit"/>
    <property type="evidence" value="ECO:0007669"/>
    <property type="project" value="UniProtKB-SubCell"/>
</dbReference>
<dbReference type="GO" id="GO:0005829">
    <property type="term" value="C:cytosol"/>
    <property type="evidence" value="ECO:0000314"/>
    <property type="project" value="CAFA"/>
</dbReference>
<dbReference type="GO" id="GO:0005768">
    <property type="term" value="C:endosome"/>
    <property type="evidence" value="ECO:0000318"/>
    <property type="project" value="GO_Central"/>
</dbReference>
<dbReference type="GO" id="GO:0005634">
    <property type="term" value="C:nucleus"/>
    <property type="evidence" value="ECO:0007669"/>
    <property type="project" value="UniProtKB-SubCell"/>
</dbReference>
<dbReference type="GO" id="GO:0005886">
    <property type="term" value="C:plasma membrane"/>
    <property type="evidence" value="ECO:0000314"/>
    <property type="project" value="BHF-UCL"/>
</dbReference>
<dbReference type="GO" id="GO:0098794">
    <property type="term" value="C:postsynapse"/>
    <property type="evidence" value="ECO:0000314"/>
    <property type="project" value="SynGO"/>
</dbReference>
<dbReference type="GO" id="GO:0045211">
    <property type="term" value="C:postsynaptic membrane"/>
    <property type="evidence" value="ECO:0000314"/>
    <property type="project" value="BHF-UCL"/>
</dbReference>
<dbReference type="GO" id="GO:0042734">
    <property type="term" value="C:presynaptic membrane"/>
    <property type="evidence" value="ECO:0000314"/>
    <property type="project" value="BHF-UCL"/>
</dbReference>
<dbReference type="GO" id="GO:0098685">
    <property type="term" value="C:Schaffer collateral - CA1 synapse"/>
    <property type="evidence" value="ECO:0000314"/>
    <property type="project" value="SynGO"/>
</dbReference>
<dbReference type="GO" id="GO:0043195">
    <property type="term" value="C:terminal bouton"/>
    <property type="evidence" value="ECO:0007005"/>
    <property type="project" value="ParkinsonsUK-UCL"/>
</dbReference>
<dbReference type="GO" id="GO:0035615">
    <property type="term" value="F:clathrin adaptor activity"/>
    <property type="evidence" value="ECO:0000315"/>
    <property type="project" value="CAFA"/>
</dbReference>
<dbReference type="GO" id="GO:0030276">
    <property type="term" value="F:clathrin binding"/>
    <property type="evidence" value="ECO:0000318"/>
    <property type="project" value="GO_Central"/>
</dbReference>
<dbReference type="GO" id="GO:0140313">
    <property type="term" value="F:molecular sequestering activity"/>
    <property type="evidence" value="ECO:0000266"/>
    <property type="project" value="RGD"/>
</dbReference>
<dbReference type="GO" id="GO:0005543">
    <property type="term" value="F:phospholipid binding"/>
    <property type="evidence" value="ECO:0000318"/>
    <property type="project" value="GO_Central"/>
</dbReference>
<dbReference type="GO" id="GO:0044325">
    <property type="term" value="F:transmembrane transporter binding"/>
    <property type="evidence" value="ECO:0000353"/>
    <property type="project" value="RGD"/>
</dbReference>
<dbReference type="GO" id="GO:0048268">
    <property type="term" value="P:clathrin coat assembly"/>
    <property type="evidence" value="ECO:0000314"/>
    <property type="project" value="DisProt"/>
</dbReference>
<dbReference type="GO" id="GO:0048568">
    <property type="term" value="P:embryonic organ development"/>
    <property type="evidence" value="ECO:0000266"/>
    <property type="project" value="RGD"/>
</dbReference>
<dbReference type="GO" id="GO:0006897">
    <property type="term" value="P:endocytosis"/>
    <property type="evidence" value="ECO:0000314"/>
    <property type="project" value="RGD"/>
</dbReference>
<dbReference type="GO" id="GO:0007565">
    <property type="term" value="P:female pregnancy"/>
    <property type="evidence" value="ECO:0000266"/>
    <property type="project" value="RGD"/>
</dbReference>
<dbReference type="GO" id="GO:0001701">
    <property type="term" value="P:in utero embryonic development"/>
    <property type="evidence" value="ECO:0000266"/>
    <property type="project" value="RGD"/>
</dbReference>
<dbReference type="GO" id="GO:0090148">
    <property type="term" value="P:membrane fission"/>
    <property type="evidence" value="ECO:0000314"/>
    <property type="project" value="CACAO"/>
</dbReference>
<dbReference type="GO" id="GO:1903671">
    <property type="term" value="P:negative regulation of sprouting angiogenesis"/>
    <property type="evidence" value="ECO:0000266"/>
    <property type="project" value="RGD"/>
</dbReference>
<dbReference type="GO" id="GO:0007219">
    <property type="term" value="P:Notch signaling pathway"/>
    <property type="evidence" value="ECO:0000266"/>
    <property type="project" value="RGD"/>
</dbReference>
<dbReference type="GO" id="GO:1905445">
    <property type="term" value="P:positive regulation of clathrin coat assembly"/>
    <property type="evidence" value="ECO:0000315"/>
    <property type="project" value="CAFA"/>
</dbReference>
<dbReference type="CDD" id="cd16990">
    <property type="entry name" value="ENTH_Epsin"/>
    <property type="match status" value="1"/>
</dbReference>
<dbReference type="DisProt" id="DP00251"/>
<dbReference type="FunFam" id="1.25.40.90:FF:000002">
    <property type="entry name" value="epsin-2 isoform X1"/>
    <property type="match status" value="1"/>
</dbReference>
<dbReference type="Gene3D" id="1.25.40.90">
    <property type="match status" value="1"/>
</dbReference>
<dbReference type="InterPro" id="IPR013809">
    <property type="entry name" value="ENTH"/>
</dbReference>
<dbReference type="InterPro" id="IPR008942">
    <property type="entry name" value="ENTH_VHS"/>
</dbReference>
<dbReference type="InterPro" id="IPR003903">
    <property type="entry name" value="UIM_dom"/>
</dbReference>
<dbReference type="PANTHER" id="PTHR12276:SF48">
    <property type="entry name" value="EPSIN-1"/>
    <property type="match status" value="1"/>
</dbReference>
<dbReference type="PANTHER" id="PTHR12276">
    <property type="entry name" value="EPSIN/ENT-RELATED"/>
    <property type="match status" value="1"/>
</dbReference>
<dbReference type="Pfam" id="PF01417">
    <property type="entry name" value="ENTH"/>
    <property type="match status" value="1"/>
</dbReference>
<dbReference type="SMART" id="SM00273">
    <property type="entry name" value="ENTH"/>
    <property type="match status" value="1"/>
</dbReference>
<dbReference type="SMART" id="SM00726">
    <property type="entry name" value="UIM"/>
    <property type="match status" value="3"/>
</dbReference>
<dbReference type="SUPFAM" id="SSF48464">
    <property type="entry name" value="ENTH/VHS domain"/>
    <property type="match status" value="1"/>
</dbReference>
<dbReference type="PROSITE" id="PS50942">
    <property type="entry name" value="ENTH"/>
    <property type="match status" value="1"/>
</dbReference>
<dbReference type="PROSITE" id="PS50330">
    <property type="entry name" value="UIM"/>
    <property type="match status" value="3"/>
</dbReference>
<reference key="1">
    <citation type="journal article" date="1998" name="Nature">
        <title>Epsin is an EH-domain-binding protein implicated in clathrin-mediated endocytosis.</title>
        <authorList>
            <person name="Chen H."/>
            <person name="Fre S."/>
            <person name="Slepnev V.I."/>
            <person name="Capua M.R."/>
            <person name="Takei K."/>
            <person name="Butler M.H."/>
            <person name="Di Fiore P.P."/>
            <person name="De Camilli P."/>
        </authorList>
    </citation>
    <scope>NUCLEOTIDE SEQUENCE [MRNA]</scope>
    <scope>FUNCTION</scope>
    <scope>SUBCELLULAR LOCATION</scope>
    <scope>TISSUE SPECIFICITY</scope>
    <scope>INTERACTION WITH EPS15; AP2A1 AND AP2A2</scope>
    <source>
        <strain>Wistar</strain>
        <tissue>Brain</tissue>
    </source>
</reference>
<reference key="2">
    <citation type="journal article" date="1999" name="EMBO J.">
        <title>Small G protein Ral and its downstream molecules regulate endocytosis of EGF and insulin receptors.</title>
        <authorList>
            <person name="Nakashima S."/>
            <person name="Morinaka K."/>
            <person name="Koyama S."/>
            <person name="Ikeda M."/>
            <person name="Kishida M."/>
            <person name="Okawa K."/>
            <person name="Iwamatsu A."/>
            <person name="Kishida S."/>
            <person name="Kikuchi A."/>
        </authorList>
    </citation>
    <scope>TISSUE SPECIFICITY</scope>
</reference>
<reference key="3">
    <citation type="journal article" date="1999" name="Cell">
        <title>A structural explanation for the binding of multiple ligands by the alpha-adaptin appendage domain.</title>
        <authorList>
            <person name="Owen D.J."/>
            <person name="Vallis Y."/>
            <person name="Noble M.E.M."/>
            <person name="Hunter J.B."/>
            <person name="Dafforn T.R."/>
            <person name="Evans P.R."/>
            <person name="McMahon H.T."/>
        </authorList>
    </citation>
    <scope>INTERACTION WITH AP2A2</scope>
</reference>
<reference key="4">
    <citation type="journal article" date="1999" name="J. Biol. Chem.">
        <title>The interaction of epsin and Eps15 with the clathrin adaptor AP-2 is inhibited by mitotic phosphorylation and enhanced by stimulation-dependent dephosphorylation in nerve terminals.</title>
        <authorList>
            <person name="Chen H."/>
            <person name="Slepnev V.I."/>
            <person name="Di Fiore P.P."/>
            <person name="De Camilli P."/>
        </authorList>
    </citation>
    <scope>PHOSPHORYLATION</scope>
    <scope>INTERACTION WITH AP-2</scope>
</reference>
<reference key="5">
    <citation type="journal article" date="1999" name="Proc. Natl. Acad. Sci. U.S.A.">
        <title>Crystal structure of the alpha appendage of AP-2 reveals a recruitment platform for clathrin-coat assembly.</title>
        <authorList>
            <person name="Traub L.M."/>
            <person name="Downs M.A."/>
            <person name="Westrich J.L."/>
            <person name="Fremont D.H."/>
        </authorList>
    </citation>
    <scope>INTERACTION WITH AP2A2</scope>
</reference>
<reference key="6">
    <citation type="journal article" date="2000" name="EMBO J.">
        <title>The structure and function of the beta 2-adaptin appendage domain.</title>
        <authorList>
            <person name="Owen D.J."/>
            <person name="Vallis Y."/>
            <person name="Pearse B.M.F."/>
            <person name="McMahon H.T."/>
            <person name="Evans P.R."/>
        </authorList>
    </citation>
    <scope>INTERACTION WITH AP2B1</scope>
</reference>
<reference key="7">
    <citation type="journal article" date="2000" name="J. Biol. Chem.">
        <title>Epsin binds to clathrin by associating directly with the clathrin-terminal domain. Evidence for cooperative binding through two discrete sites.</title>
        <authorList>
            <person name="Drake M.T."/>
            <person name="Downs M.A."/>
            <person name="Traub L.M."/>
        </authorList>
    </citation>
    <scope>MUTAGENESIS OF 257-LEU--ASP-259 AND 260-LEU--VAL-263</scope>
    <scope>SUBCELLULAR LOCATION</scope>
    <scope>INTERACTION WITH CLATHRIN HEAVY CHAIN AND AP-2</scope>
</reference>
<reference key="8">
    <citation type="journal article" date="2001" name="Science">
        <title>Role of the ENTH domain in phosphatidylinositol-4,5-bisphosphate binding and endocytosis.</title>
        <authorList>
            <person name="Itoh T."/>
            <person name="Koshiba S."/>
            <person name="Kigawa T."/>
            <person name="Kikuchi A."/>
            <person name="Yokoyama S."/>
            <person name="Takenawa T."/>
        </authorList>
    </citation>
    <scope>FUNCTION</scope>
    <scope>INTERACTION WITH ZBTB16</scope>
    <scope>SUBCELLULAR LOCATION</scope>
    <scope>MUTAGENESIS OF ARG-8; ARG-63; ARG-72 AND LYS-76</scope>
</reference>
<reference key="9">
    <citation type="journal article" date="2002" name="Nature">
        <title>A single motif responsible for ubiquitin recognition and monoubiquitination in endocytic proteins.</title>
        <authorList>
            <person name="Polo S."/>
            <person name="Sigismund S."/>
            <person name="Faretta M."/>
            <person name="Guidi M."/>
            <person name="Capua M.R."/>
            <person name="Bossi G."/>
            <person name="Chen H."/>
            <person name="De Camilli P."/>
            <person name="Di Fiore P.P."/>
        </authorList>
    </citation>
    <scope>MUTAGENESIS OF LEU-190</scope>
    <scope>UBIQUITINATION</scope>
</reference>
<reference key="10">
    <citation type="journal article" date="2012" name="Nat. Commun.">
        <title>Quantitative maps of protein phosphorylation sites across 14 different rat organs and tissues.</title>
        <authorList>
            <person name="Lundby A."/>
            <person name="Secher A."/>
            <person name="Lage K."/>
            <person name="Nordsborg N.B."/>
            <person name="Dmytriyev A."/>
            <person name="Lundby C."/>
            <person name="Olsen J.V."/>
        </authorList>
    </citation>
    <scope>PHOSPHORYLATION [LARGE SCALE ANALYSIS] AT SER-453 AND THR-469</scope>
    <scope>IDENTIFICATION BY MASS SPECTROMETRY [LARGE SCALE ANALYSIS]</scope>
</reference>
<reference key="11">
    <citation type="journal article" date="2000" name="J. Cell Biol.">
        <title>Epsin 1 undergoes nucleocytosolic shuttling and its eps15 interactor NH(2)-terminal homology (ENTH) domain, structurally similar to Armadillo and Heat repeats, interacts with the transcription factor promyelocytic leukemia Zn(2)+ finger protein (PLZF).</title>
        <authorList>
            <person name="Hyman J."/>
            <person name="Chen H."/>
            <person name="Di Fiore P.P."/>
            <person name="De Camilli P."/>
            <person name="Brunger A.T."/>
        </authorList>
    </citation>
    <scope>X-RAY CRYSTALLOGRAPHY (1.8 ANGSTROMS) OF 12-160</scope>
    <scope>SUBCELLULAR LOCATION</scope>
    <scope>INTERACTION WITH ZNF145</scope>
</reference>
<reference key="12">
    <citation type="journal article" date="2002" name="Nature">
        <title>Curvature of clathrin-coated pits driven by epsin.</title>
        <authorList>
            <person name="Ford M.G.J."/>
            <person name="Mills I.G."/>
            <person name="Peter B.J."/>
            <person name="Vallis Y."/>
            <person name="Praefcke G.J.K."/>
            <person name="Evans P.R."/>
            <person name="McMahon H.T."/>
        </authorList>
    </citation>
    <scope>X-RAY CRYSTALLOGRAPHY (1.7 ANGSTROMS) OF 1-158 IN COMPLEX WITH INOSITOL-1,4,5-TRIPHOSPHATE</scope>
    <scope>FUNCTION</scope>
    <scope>MUTAGENESIS OF LEU-6; ARG-63 AND HIS-73</scope>
</reference>
<reference key="13">
    <citation type="journal article" date="2002" name="Structure">
        <title>Accessory protein recruitment motifs in clathrin-mediated endocytosis.</title>
        <authorList>
            <person name="Brett T.J."/>
            <person name="Traub L.M."/>
            <person name="Fremont D.H."/>
        </authorList>
    </citation>
    <scope>X-RAY CRYSTALLOGRAPHY (2.0 ANGSTROMS) OF 375-381 IN COMPLEX WITH AP2A2</scope>
</reference>
<protein>
    <recommendedName>
        <fullName>Epsin-1</fullName>
    </recommendedName>
    <alternativeName>
        <fullName>EPS-15-interacting protein 1</fullName>
    </alternativeName>
</protein>
<gene>
    <name type="primary">Epn1</name>
</gene>